<name>MURD_ALKOO</name>
<keyword id="KW-0067">ATP-binding</keyword>
<keyword id="KW-0131">Cell cycle</keyword>
<keyword id="KW-0132">Cell division</keyword>
<keyword id="KW-0133">Cell shape</keyword>
<keyword id="KW-0961">Cell wall biogenesis/degradation</keyword>
<keyword id="KW-0963">Cytoplasm</keyword>
<keyword id="KW-0436">Ligase</keyword>
<keyword id="KW-0547">Nucleotide-binding</keyword>
<keyword id="KW-0573">Peptidoglycan synthesis</keyword>
<keyword id="KW-1185">Reference proteome</keyword>
<protein>
    <recommendedName>
        <fullName evidence="1">UDP-N-acetylmuramoylalanine--D-glutamate ligase</fullName>
        <ecNumber evidence="1">6.3.2.9</ecNumber>
    </recommendedName>
    <alternativeName>
        <fullName evidence="1">D-glutamic acid-adding enzyme</fullName>
    </alternativeName>
    <alternativeName>
        <fullName evidence="1">UDP-N-acetylmuramoyl-L-alanyl-D-glutamate synthetase</fullName>
    </alternativeName>
</protein>
<comment type="function">
    <text evidence="1">Cell wall formation. Catalyzes the addition of glutamate to the nucleotide precursor UDP-N-acetylmuramoyl-L-alanine (UMA).</text>
</comment>
<comment type="catalytic activity">
    <reaction evidence="1">
        <text>UDP-N-acetyl-alpha-D-muramoyl-L-alanine + D-glutamate + ATP = UDP-N-acetyl-alpha-D-muramoyl-L-alanyl-D-glutamate + ADP + phosphate + H(+)</text>
        <dbReference type="Rhea" id="RHEA:16429"/>
        <dbReference type="ChEBI" id="CHEBI:15378"/>
        <dbReference type="ChEBI" id="CHEBI:29986"/>
        <dbReference type="ChEBI" id="CHEBI:30616"/>
        <dbReference type="ChEBI" id="CHEBI:43474"/>
        <dbReference type="ChEBI" id="CHEBI:83898"/>
        <dbReference type="ChEBI" id="CHEBI:83900"/>
        <dbReference type="ChEBI" id="CHEBI:456216"/>
        <dbReference type="EC" id="6.3.2.9"/>
    </reaction>
</comment>
<comment type="pathway">
    <text evidence="1">Cell wall biogenesis; peptidoglycan biosynthesis.</text>
</comment>
<comment type="subcellular location">
    <subcellularLocation>
        <location evidence="1">Cytoplasm</location>
    </subcellularLocation>
</comment>
<comment type="similarity">
    <text evidence="1">Belongs to the MurCDEF family.</text>
</comment>
<feature type="chain" id="PRO_1000061450" description="UDP-N-acetylmuramoylalanine--D-glutamate ligase">
    <location>
        <begin position="1"/>
        <end position="454"/>
    </location>
</feature>
<feature type="binding site" evidence="1">
    <location>
        <begin position="117"/>
        <end position="123"/>
    </location>
    <ligand>
        <name>ATP</name>
        <dbReference type="ChEBI" id="CHEBI:30616"/>
    </ligand>
</feature>
<gene>
    <name evidence="1" type="primary">murD</name>
    <name type="ordered locus">Clos_1377</name>
</gene>
<dbReference type="EC" id="6.3.2.9" evidence="1"/>
<dbReference type="EMBL" id="CP000853">
    <property type="protein sequence ID" value="ABW18921.1"/>
    <property type="molecule type" value="Genomic_DNA"/>
</dbReference>
<dbReference type="RefSeq" id="WP_012159233.1">
    <property type="nucleotide sequence ID" value="NC_009922.1"/>
</dbReference>
<dbReference type="SMR" id="A8MH34"/>
<dbReference type="STRING" id="350688.Clos_1377"/>
<dbReference type="KEGG" id="aoe:Clos_1377"/>
<dbReference type="eggNOG" id="COG0771">
    <property type="taxonomic scope" value="Bacteria"/>
</dbReference>
<dbReference type="HOGENOM" id="CLU_032540_0_0_9"/>
<dbReference type="OrthoDB" id="9809796at2"/>
<dbReference type="UniPathway" id="UPA00219"/>
<dbReference type="Proteomes" id="UP000000269">
    <property type="component" value="Chromosome"/>
</dbReference>
<dbReference type="GO" id="GO:0005737">
    <property type="term" value="C:cytoplasm"/>
    <property type="evidence" value="ECO:0007669"/>
    <property type="project" value="UniProtKB-SubCell"/>
</dbReference>
<dbReference type="GO" id="GO:0005524">
    <property type="term" value="F:ATP binding"/>
    <property type="evidence" value="ECO:0007669"/>
    <property type="project" value="UniProtKB-UniRule"/>
</dbReference>
<dbReference type="GO" id="GO:0008764">
    <property type="term" value="F:UDP-N-acetylmuramoylalanine-D-glutamate ligase activity"/>
    <property type="evidence" value="ECO:0007669"/>
    <property type="project" value="UniProtKB-UniRule"/>
</dbReference>
<dbReference type="GO" id="GO:0051301">
    <property type="term" value="P:cell division"/>
    <property type="evidence" value="ECO:0007669"/>
    <property type="project" value="UniProtKB-KW"/>
</dbReference>
<dbReference type="GO" id="GO:0071555">
    <property type="term" value="P:cell wall organization"/>
    <property type="evidence" value="ECO:0007669"/>
    <property type="project" value="UniProtKB-KW"/>
</dbReference>
<dbReference type="GO" id="GO:0009252">
    <property type="term" value="P:peptidoglycan biosynthetic process"/>
    <property type="evidence" value="ECO:0007669"/>
    <property type="project" value="UniProtKB-UniRule"/>
</dbReference>
<dbReference type="GO" id="GO:0008360">
    <property type="term" value="P:regulation of cell shape"/>
    <property type="evidence" value="ECO:0007669"/>
    <property type="project" value="UniProtKB-KW"/>
</dbReference>
<dbReference type="Gene3D" id="3.90.190.20">
    <property type="entry name" value="Mur ligase, C-terminal domain"/>
    <property type="match status" value="1"/>
</dbReference>
<dbReference type="Gene3D" id="3.40.1190.10">
    <property type="entry name" value="Mur-like, catalytic domain"/>
    <property type="match status" value="1"/>
</dbReference>
<dbReference type="Gene3D" id="3.40.50.720">
    <property type="entry name" value="NAD(P)-binding Rossmann-like Domain"/>
    <property type="match status" value="1"/>
</dbReference>
<dbReference type="HAMAP" id="MF_00639">
    <property type="entry name" value="MurD"/>
    <property type="match status" value="1"/>
</dbReference>
<dbReference type="InterPro" id="IPR036565">
    <property type="entry name" value="Mur-like_cat_sf"/>
</dbReference>
<dbReference type="InterPro" id="IPR004101">
    <property type="entry name" value="Mur_ligase_C"/>
</dbReference>
<dbReference type="InterPro" id="IPR036615">
    <property type="entry name" value="Mur_ligase_C_dom_sf"/>
</dbReference>
<dbReference type="InterPro" id="IPR013221">
    <property type="entry name" value="Mur_ligase_cen"/>
</dbReference>
<dbReference type="InterPro" id="IPR005762">
    <property type="entry name" value="MurD"/>
</dbReference>
<dbReference type="NCBIfam" id="TIGR01087">
    <property type="entry name" value="murD"/>
    <property type="match status" value="1"/>
</dbReference>
<dbReference type="PANTHER" id="PTHR43692">
    <property type="entry name" value="UDP-N-ACETYLMURAMOYLALANINE--D-GLUTAMATE LIGASE"/>
    <property type="match status" value="1"/>
</dbReference>
<dbReference type="PANTHER" id="PTHR43692:SF1">
    <property type="entry name" value="UDP-N-ACETYLMURAMOYLALANINE--D-GLUTAMATE LIGASE"/>
    <property type="match status" value="1"/>
</dbReference>
<dbReference type="Pfam" id="PF02875">
    <property type="entry name" value="Mur_ligase_C"/>
    <property type="match status" value="1"/>
</dbReference>
<dbReference type="Pfam" id="PF08245">
    <property type="entry name" value="Mur_ligase_M"/>
    <property type="match status" value="1"/>
</dbReference>
<dbReference type="Pfam" id="PF21799">
    <property type="entry name" value="MurD-like_N"/>
    <property type="match status" value="1"/>
</dbReference>
<dbReference type="SUPFAM" id="SSF51984">
    <property type="entry name" value="MurCD N-terminal domain"/>
    <property type="match status" value="1"/>
</dbReference>
<dbReference type="SUPFAM" id="SSF53623">
    <property type="entry name" value="MurD-like peptide ligases, catalytic domain"/>
    <property type="match status" value="1"/>
</dbReference>
<dbReference type="SUPFAM" id="SSF53244">
    <property type="entry name" value="MurD-like peptide ligases, peptide-binding domain"/>
    <property type="match status" value="1"/>
</dbReference>
<reference key="1">
    <citation type="submission" date="2007-10" db="EMBL/GenBank/DDBJ databases">
        <title>Complete genome of Alkaliphilus oremlandii OhILAs.</title>
        <authorList>
            <person name="Copeland A."/>
            <person name="Lucas S."/>
            <person name="Lapidus A."/>
            <person name="Barry K."/>
            <person name="Detter J.C."/>
            <person name="Glavina del Rio T."/>
            <person name="Hammon N."/>
            <person name="Israni S."/>
            <person name="Dalin E."/>
            <person name="Tice H."/>
            <person name="Pitluck S."/>
            <person name="Chain P."/>
            <person name="Malfatti S."/>
            <person name="Shin M."/>
            <person name="Vergez L."/>
            <person name="Schmutz J."/>
            <person name="Larimer F."/>
            <person name="Land M."/>
            <person name="Hauser L."/>
            <person name="Kyrpides N."/>
            <person name="Mikhailova N."/>
            <person name="Stolz J.F."/>
            <person name="Dawson A."/>
            <person name="Fisher E."/>
            <person name="Crable B."/>
            <person name="Perera E."/>
            <person name="Lisak J."/>
            <person name="Ranganathan M."/>
            <person name="Basu P."/>
            <person name="Richardson P."/>
        </authorList>
    </citation>
    <scope>NUCLEOTIDE SEQUENCE [LARGE SCALE GENOMIC DNA]</scope>
    <source>
        <strain>OhILAs</strain>
    </source>
</reference>
<sequence length="454" mass="50251">MNLKEKNVLVIGFAVTGIPLVKVLCQLGANVIVNDSKKEEALKESMKLLSDHPIQYILGKHPEIEELSAPLDLVVVSPGVPLDIPFIENLRARGIEIIGEIELAYRLAQGHIVAITGTNGKTTTTSLVGEIFKNAGRRTHVVGNIGVAFISKALETTADDVIVIEASSFQLESIVDFRPQVGAILNLTPDHLNRHKTMENYQKAKFNIFKNQGAEDIAVINYDDVKLREESKQIYAKKVYFSRRTLLEEGVFVEDGKIVALKDGHKKEIISKDDIFIPGNHNLENALAATAMTLSLGVDIDVIQHTLKTFKGVEHRTEIVDVIHGVRFINDSKGTNPDASIKGIEGINTPILLIAGGYDKGSDFDEFINAFDGKVKHMFVYGETANTLMETAKKLNFIDVTKVQNLDEAVKKAYDIAIQGDTVLLSPACASWDMYENFEMRGKHFKEIVANLRR</sequence>
<accession>A8MH34</accession>
<proteinExistence type="inferred from homology"/>
<organism>
    <name type="scientific">Alkaliphilus oremlandii (strain OhILAs)</name>
    <name type="common">Clostridium oremlandii (strain OhILAs)</name>
    <dbReference type="NCBI Taxonomy" id="350688"/>
    <lineage>
        <taxon>Bacteria</taxon>
        <taxon>Bacillati</taxon>
        <taxon>Bacillota</taxon>
        <taxon>Clostridia</taxon>
        <taxon>Peptostreptococcales</taxon>
        <taxon>Natronincolaceae</taxon>
        <taxon>Alkaliphilus</taxon>
    </lineage>
</organism>
<evidence type="ECO:0000255" key="1">
    <source>
        <dbReference type="HAMAP-Rule" id="MF_00639"/>
    </source>
</evidence>